<gene>
    <name type="ORF">SPAC8E11.08c</name>
</gene>
<keyword id="KW-1185">Reference proteome</keyword>
<protein>
    <recommendedName>
        <fullName>Putative uncharacterized protein C8E11.08c</fullName>
    </recommendedName>
</protein>
<name>YFQ8_SCHPO</name>
<organism>
    <name type="scientific">Schizosaccharomyces pombe (strain 972 / ATCC 24843)</name>
    <name type="common">Fission yeast</name>
    <dbReference type="NCBI Taxonomy" id="284812"/>
    <lineage>
        <taxon>Eukaryota</taxon>
        <taxon>Fungi</taxon>
        <taxon>Dikarya</taxon>
        <taxon>Ascomycota</taxon>
        <taxon>Taphrinomycotina</taxon>
        <taxon>Schizosaccharomycetes</taxon>
        <taxon>Schizosaccharomycetales</taxon>
        <taxon>Schizosaccharomycetaceae</taxon>
        <taxon>Schizosaccharomyces</taxon>
    </lineage>
</organism>
<proteinExistence type="predicted"/>
<sequence length="100" mass="12074">MDFTTNEVLFSRLVVCKNLTRKNFPFLQLKGSSILRFEWSEEMYRLYIWLLPYRKDYNEKFKGILINPSIFLLGCHHVQICSFPNNLVFFMGKCDLFRFC</sequence>
<accession>A6X974</accession>
<dbReference type="EMBL" id="CU329670">
    <property type="protein sequence ID" value="CAO77642.1"/>
    <property type="molecule type" value="Genomic_DNA"/>
</dbReference>
<dbReference type="RefSeq" id="XP_001713081.1">
    <property type="nucleotide sequence ID" value="XM_001713029.2"/>
</dbReference>
<dbReference type="PaxDb" id="4896-SPAC8E11.08c.1"/>
<dbReference type="EnsemblFungi" id="SPAC8E11.08c.1">
    <property type="protein sequence ID" value="SPAC8E11.08c.1:pep"/>
    <property type="gene ID" value="SPAC8E11.08c"/>
</dbReference>
<dbReference type="PomBase" id="SPAC8E11.08c"/>
<dbReference type="VEuPathDB" id="FungiDB:SPAC8E11.08c"/>
<dbReference type="HOGENOM" id="CLU_2307676_0_0_1"/>
<dbReference type="InParanoid" id="A6X974"/>
<dbReference type="PRO" id="PR:A6X974"/>
<dbReference type="Proteomes" id="UP000002485">
    <property type="component" value="Chromosome I"/>
</dbReference>
<feature type="chain" id="PRO_0000303986" description="Putative uncharacterized protein C8E11.08c">
    <location>
        <begin position="1"/>
        <end position="100"/>
    </location>
</feature>
<reference key="1">
    <citation type="journal article" date="2002" name="Nature">
        <title>The genome sequence of Schizosaccharomyces pombe.</title>
        <authorList>
            <person name="Wood V."/>
            <person name="Gwilliam R."/>
            <person name="Rajandream M.A."/>
            <person name="Lyne M.H."/>
            <person name="Lyne R."/>
            <person name="Stewart A."/>
            <person name="Sgouros J.G."/>
            <person name="Peat N."/>
            <person name="Hayles J."/>
            <person name="Baker S.G."/>
            <person name="Basham D."/>
            <person name="Bowman S."/>
            <person name="Brooks K."/>
            <person name="Brown D."/>
            <person name="Brown S."/>
            <person name="Chillingworth T."/>
            <person name="Churcher C.M."/>
            <person name="Collins M."/>
            <person name="Connor R."/>
            <person name="Cronin A."/>
            <person name="Davis P."/>
            <person name="Feltwell T."/>
            <person name="Fraser A."/>
            <person name="Gentles S."/>
            <person name="Goble A."/>
            <person name="Hamlin N."/>
            <person name="Harris D.E."/>
            <person name="Hidalgo J."/>
            <person name="Hodgson G."/>
            <person name="Holroyd S."/>
            <person name="Hornsby T."/>
            <person name="Howarth S."/>
            <person name="Huckle E.J."/>
            <person name="Hunt S."/>
            <person name="Jagels K."/>
            <person name="James K.D."/>
            <person name="Jones L."/>
            <person name="Jones M."/>
            <person name="Leather S."/>
            <person name="McDonald S."/>
            <person name="McLean J."/>
            <person name="Mooney P."/>
            <person name="Moule S."/>
            <person name="Mungall K.L."/>
            <person name="Murphy L.D."/>
            <person name="Niblett D."/>
            <person name="Odell C."/>
            <person name="Oliver K."/>
            <person name="O'Neil S."/>
            <person name="Pearson D."/>
            <person name="Quail M.A."/>
            <person name="Rabbinowitsch E."/>
            <person name="Rutherford K.M."/>
            <person name="Rutter S."/>
            <person name="Saunders D."/>
            <person name="Seeger K."/>
            <person name="Sharp S."/>
            <person name="Skelton J."/>
            <person name="Simmonds M.N."/>
            <person name="Squares R."/>
            <person name="Squares S."/>
            <person name="Stevens K."/>
            <person name="Taylor K."/>
            <person name="Taylor R.G."/>
            <person name="Tivey A."/>
            <person name="Walsh S.V."/>
            <person name="Warren T."/>
            <person name="Whitehead S."/>
            <person name="Woodward J.R."/>
            <person name="Volckaert G."/>
            <person name="Aert R."/>
            <person name="Robben J."/>
            <person name="Grymonprez B."/>
            <person name="Weltjens I."/>
            <person name="Vanstreels E."/>
            <person name="Rieger M."/>
            <person name="Schaefer M."/>
            <person name="Mueller-Auer S."/>
            <person name="Gabel C."/>
            <person name="Fuchs M."/>
            <person name="Duesterhoeft A."/>
            <person name="Fritzc C."/>
            <person name="Holzer E."/>
            <person name="Moestl D."/>
            <person name="Hilbert H."/>
            <person name="Borzym K."/>
            <person name="Langer I."/>
            <person name="Beck A."/>
            <person name="Lehrach H."/>
            <person name="Reinhardt R."/>
            <person name="Pohl T.M."/>
            <person name="Eger P."/>
            <person name="Zimmermann W."/>
            <person name="Wedler H."/>
            <person name="Wambutt R."/>
            <person name="Purnelle B."/>
            <person name="Goffeau A."/>
            <person name="Cadieu E."/>
            <person name="Dreano S."/>
            <person name="Gloux S."/>
            <person name="Lelaure V."/>
            <person name="Mottier S."/>
            <person name="Galibert F."/>
            <person name="Aves S.J."/>
            <person name="Xiang Z."/>
            <person name="Hunt C."/>
            <person name="Moore K."/>
            <person name="Hurst S.M."/>
            <person name="Lucas M."/>
            <person name="Rochet M."/>
            <person name="Gaillardin C."/>
            <person name="Tallada V.A."/>
            <person name="Garzon A."/>
            <person name="Thode G."/>
            <person name="Daga R.R."/>
            <person name="Cruzado L."/>
            <person name="Jimenez J."/>
            <person name="Sanchez M."/>
            <person name="del Rey F."/>
            <person name="Benito J."/>
            <person name="Dominguez A."/>
            <person name="Revuelta J.L."/>
            <person name="Moreno S."/>
            <person name="Armstrong J."/>
            <person name="Forsburg S.L."/>
            <person name="Cerutti L."/>
            <person name="Lowe T."/>
            <person name="McCombie W.R."/>
            <person name="Paulsen I."/>
            <person name="Potashkin J."/>
            <person name="Shpakovski G.V."/>
            <person name="Ussery D."/>
            <person name="Barrell B.G."/>
            <person name="Nurse P."/>
        </authorList>
    </citation>
    <scope>NUCLEOTIDE SEQUENCE [LARGE SCALE GENOMIC DNA]</scope>
    <source>
        <strain>972 / ATCC 24843</strain>
    </source>
</reference>